<feature type="signal peptide" evidence="1">
    <location>
        <begin position="1"/>
        <end position="32"/>
    </location>
</feature>
<feature type="chain" id="PRO_0000280283" description="Myelin protein zero-like protein 3">
    <location>
        <begin position="33"/>
        <end position="237"/>
    </location>
</feature>
<feature type="topological domain" description="Extracellular" evidence="2">
    <location>
        <begin position="33"/>
        <end position="159"/>
    </location>
</feature>
<feature type="transmembrane region" description="Helical" evidence="2">
    <location>
        <begin position="160"/>
        <end position="180"/>
    </location>
</feature>
<feature type="topological domain" description="Cytoplasmic" evidence="2">
    <location>
        <begin position="181"/>
        <end position="237"/>
    </location>
</feature>
<feature type="domain" description="Ig-like V-type">
    <location>
        <begin position="33"/>
        <end position="149"/>
    </location>
</feature>
<feature type="glycosylation site" description="N-linked (GlcNAc...) asparagine" evidence="2">
    <location>
        <position position="124"/>
    </location>
</feature>
<feature type="disulfide bond" evidence="3">
    <location>
        <begin position="53"/>
        <end position="129"/>
    </location>
</feature>
<feature type="splice variant" id="VSP_023606" description="In isoform 2." evidence="5 6">
    <original>IFHYQSFQYPTTAGT</original>
    <variation>VSVGFPERPLECLAG</variation>
    <location>
        <begin position="82"/>
        <end position="96"/>
    </location>
</feature>
<feature type="splice variant" id="VSP_023607" description="In isoform 2." evidence="5 6">
    <location>
        <begin position="97"/>
        <end position="237"/>
    </location>
</feature>
<feature type="sequence variant" description="In rc." evidence="4">
    <original>R</original>
    <variation>Q</variation>
    <location>
        <position position="100"/>
    </location>
</feature>
<keyword id="KW-0025">Alternative splicing</keyword>
<keyword id="KW-0130">Cell adhesion</keyword>
<keyword id="KW-0225">Disease variant</keyword>
<keyword id="KW-1015">Disulfide bond</keyword>
<keyword id="KW-0325">Glycoprotein</keyword>
<keyword id="KW-0393">Immunoglobulin domain</keyword>
<keyword id="KW-0472">Membrane</keyword>
<keyword id="KW-1185">Reference proteome</keyword>
<keyword id="KW-0732">Signal</keyword>
<keyword id="KW-0812">Transmembrane</keyword>
<keyword id="KW-1133">Transmembrane helix</keyword>
<reference key="1">
    <citation type="journal article" date="2007" name="J. Invest. Dermatol.">
        <title>Mutation in Mpzl3, a novel gene encoding a predicted adhesion protein, in rough coat (rc) mice with severe skin and hair abnormalities.</title>
        <authorList>
            <person name="Cao T."/>
            <person name="Racz P."/>
            <person name="Szauter K.M."/>
            <person name="Groma G."/>
            <person name="Nakamatsu G.Y."/>
            <person name="Fogelgren B."/>
            <person name="Pankotai E."/>
            <person name="He Q.-P."/>
            <person name="Csiszar K."/>
        </authorList>
    </citation>
    <scope>NUCLEOTIDE SEQUENCE [MRNA]</scope>
    <scope>TISSUE SPECIFICITY</scope>
    <scope>VARIANT RC GLN-100</scope>
    <source>
        <strain>C57BL/6J</strain>
    </source>
</reference>
<reference key="2">
    <citation type="journal article" date="2007" name="J. Invest. Dermatol.">
        <authorList>
            <person name="Aul R.B."/>
            <person name="Oko R.J."/>
        </authorList>
    </citation>
    <scope>ERRATUM OF PUBMED:17273165</scope>
</reference>
<reference key="3">
    <citation type="journal article" date="2005" name="Science">
        <title>The transcriptional landscape of the mammalian genome.</title>
        <authorList>
            <person name="Carninci P."/>
            <person name="Kasukawa T."/>
            <person name="Katayama S."/>
            <person name="Gough J."/>
            <person name="Frith M.C."/>
            <person name="Maeda N."/>
            <person name="Oyama R."/>
            <person name="Ravasi T."/>
            <person name="Lenhard B."/>
            <person name="Wells C."/>
            <person name="Kodzius R."/>
            <person name="Shimokawa K."/>
            <person name="Bajic V.B."/>
            <person name="Brenner S.E."/>
            <person name="Batalov S."/>
            <person name="Forrest A.R."/>
            <person name="Zavolan M."/>
            <person name="Davis M.J."/>
            <person name="Wilming L.G."/>
            <person name="Aidinis V."/>
            <person name="Allen J.E."/>
            <person name="Ambesi-Impiombato A."/>
            <person name="Apweiler R."/>
            <person name="Aturaliya R.N."/>
            <person name="Bailey T.L."/>
            <person name="Bansal M."/>
            <person name="Baxter L."/>
            <person name="Beisel K.W."/>
            <person name="Bersano T."/>
            <person name="Bono H."/>
            <person name="Chalk A.M."/>
            <person name="Chiu K.P."/>
            <person name="Choudhary V."/>
            <person name="Christoffels A."/>
            <person name="Clutterbuck D.R."/>
            <person name="Crowe M.L."/>
            <person name="Dalla E."/>
            <person name="Dalrymple B.P."/>
            <person name="de Bono B."/>
            <person name="Della Gatta G."/>
            <person name="di Bernardo D."/>
            <person name="Down T."/>
            <person name="Engstrom P."/>
            <person name="Fagiolini M."/>
            <person name="Faulkner G."/>
            <person name="Fletcher C.F."/>
            <person name="Fukushima T."/>
            <person name="Furuno M."/>
            <person name="Futaki S."/>
            <person name="Gariboldi M."/>
            <person name="Georgii-Hemming P."/>
            <person name="Gingeras T.R."/>
            <person name="Gojobori T."/>
            <person name="Green R.E."/>
            <person name="Gustincich S."/>
            <person name="Harbers M."/>
            <person name="Hayashi Y."/>
            <person name="Hensch T.K."/>
            <person name="Hirokawa N."/>
            <person name="Hill D."/>
            <person name="Huminiecki L."/>
            <person name="Iacono M."/>
            <person name="Ikeo K."/>
            <person name="Iwama A."/>
            <person name="Ishikawa T."/>
            <person name="Jakt M."/>
            <person name="Kanapin A."/>
            <person name="Katoh M."/>
            <person name="Kawasawa Y."/>
            <person name="Kelso J."/>
            <person name="Kitamura H."/>
            <person name="Kitano H."/>
            <person name="Kollias G."/>
            <person name="Krishnan S.P."/>
            <person name="Kruger A."/>
            <person name="Kummerfeld S.K."/>
            <person name="Kurochkin I.V."/>
            <person name="Lareau L.F."/>
            <person name="Lazarevic D."/>
            <person name="Lipovich L."/>
            <person name="Liu J."/>
            <person name="Liuni S."/>
            <person name="McWilliam S."/>
            <person name="Madan Babu M."/>
            <person name="Madera M."/>
            <person name="Marchionni L."/>
            <person name="Matsuda H."/>
            <person name="Matsuzawa S."/>
            <person name="Miki H."/>
            <person name="Mignone F."/>
            <person name="Miyake S."/>
            <person name="Morris K."/>
            <person name="Mottagui-Tabar S."/>
            <person name="Mulder N."/>
            <person name="Nakano N."/>
            <person name="Nakauchi H."/>
            <person name="Ng P."/>
            <person name="Nilsson R."/>
            <person name="Nishiguchi S."/>
            <person name="Nishikawa S."/>
            <person name="Nori F."/>
            <person name="Ohara O."/>
            <person name="Okazaki Y."/>
            <person name="Orlando V."/>
            <person name="Pang K.C."/>
            <person name="Pavan W.J."/>
            <person name="Pavesi G."/>
            <person name="Pesole G."/>
            <person name="Petrovsky N."/>
            <person name="Piazza S."/>
            <person name="Reed J."/>
            <person name="Reid J.F."/>
            <person name="Ring B.Z."/>
            <person name="Ringwald M."/>
            <person name="Rost B."/>
            <person name="Ruan Y."/>
            <person name="Salzberg S.L."/>
            <person name="Sandelin A."/>
            <person name="Schneider C."/>
            <person name="Schoenbach C."/>
            <person name="Sekiguchi K."/>
            <person name="Semple C.A."/>
            <person name="Seno S."/>
            <person name="Sessa L."/>
            <person name="Sheng Y."/>
            <person name="Shibata Y."/>
            <person name="Shimada H."/>
            <person name="Shimada K."/>
            <person name="Silva D."/>
            <person name="Sinclair B."/>
            <person name="Sperling S."/>
            <person name="Stupka E."/>
            <person name="Sugiura K."/>
            <person name="Sultana R."/>
            <person name="Takenaka Y."/>
            <person name="Taki K."/>
            <person name="Tammoja K."/>
            <person name="Tan S.L."/>
            <person name="Tang S."/>
            <person name="Taylor M.S."/>
            <person name="Tegner J."/>
            <person name="Teichmann S.A."/>
            <person name="Ueda H.R."/>
            <person name="van Nimwegen E."/>
            <person name="Verardo R."/>
            <person name="Wei C.L."/>
            <person name="Yagi K."/>
            <person name="Yamanishi H."/>
            <person name="Zabarovsky E."/>
            <person name="Zhu S."/>
            <person name="Zimmer A."/>
            <person name="Hide W."/>
            <person name="Bult C."/>
            <person name="Grimmond S.M."/>
            <person name="Teasdale R.D."/>
            <person name="Liu E.T."/>
            <person name="Brusic V."/>
            <person name="Quackenbush J."/>
            <person name="Wahlestedt C."/>
            <person name="Mattick J.S."/>
            <person name="Hume D.A."/>
            <person name="Kai C."/>
            <person name="Sasaki D."/>
            <person name="Tomaru Y."/>
            <person name="Fukuda S."/>
            <person name="Kanamori-Katayama M."/>
            <person name="Suzuki M."/>
            <person name="Aoki J."/>
            <person name="Arakawa T."/>
            <person name="Iida J."/>
            <person name="Imamura K."/>
            <person name="Itoh M."/>
            <person name="Kato T."/>
            <person name="Kawaji H."/>
            <person name="Kawagashira N."/>
            <person name="Kawashima T."/>
            <person name="Kojima M."/>
            <person name="Kondo S."/>
            <person name="Konno H."/>
            <person name="Nakano K."/>
            <person name="Ninomiya N."/>
            <person name="Nishio T."/>
            <person name="Okada M."/>
            <person name="Plessy C."/>
            <person name="Shibata K."/>
            <person name="Shiraki T."/>
            <person name="Suzuki S."/>
            <person name="Tagami M."/>
            <person name="Waki K."/>
            <person name="Watahiki A."/>
            <person name="Okamura-Oho Y."/>
            <person name="Suzuki H."/>
            <person name="Kawai J."/>
            <person name="Hayashizaki Y."/>
        </authorList>
    </citation>
    <scope>NUCLEOTIDE SEQUENCE [LARGE SCALE MRNA] (ISOFORM 2)</scope>
    <source>
        <strain>C57BL/6J</strain>
        <tissue>Aorta</tissue>
        <tissue>Vein</tissue>
    </source>
</reference>
<reference key="4">
    <citation type="journal article" date="2009" name="PLoS Biol.">
        <title>Lineage-specific biology revealed by a finished genome assembly of the mouse.</title>
        <authorList>
            <person name="Church D.M."/>
            <person name="Goodstadt L."/>
            <person name="Hillier L.W."/>
            <person name="Zody M.C."/>
            <person name="Goldstein S."/>
            <person name="She X."/>
            <person name="Bult C.J."/>
            <person name="Agarwala R."/>
            <person name="Cherry J.L."/>
            <person name="DiCuccio M."/>
            <person name="Hlavina W."/>
            <person name="Kapustin Y."/>
            <person name="Meric P."/>
            <person name="Maglott D."/>
            <person name="Birtle Z."/>
            <person name="Marques A.C."/>
            <person name="Graves T."/>
            <person name="Zhou S."/>
            <person name="Teague B."/>
            <person name="Potamousis K."/>
            <person name="Churas C."/>
            <person name="Place M."/>
            <person name="Herschleb J."/>
            <person name="Runnheim R."/>
            <person name="Forrest D."/>
            <person name="Amos-Landgraf J."/>
            <person name="Schwartz D.C."/>
            <person name="Cheng Z."/>
            <person name="Lindblad-Toh K."/>
            <person name="Eichler E.E."/>
            <person name="Ponting C.P."/>
        </authorList>
    </citation>
    <scope>NUCLEOTIDE SEQUENCE [LARGE SCALE GENOMIC DNA]</scope>
    <source>
        <strain>C57BL/6J</strain>
    </source>
</reference>
<reference key="5">
    <citation type="journal article" date="2004" name="Genome Res.">
        <title>The status, quality, and expansion of the NIH full-length cDNA project: the Mammalian Gene Collection (MGC).</title>
        <authorList>
            <consortium name="The MGC Project Team"/>
        </authorList>
    </citation>
    <scope>NUCLEOTIDE SEQUENCE [LARGE SCALE MRNA] (ISOFORM 2)</scope>
</reference>
<protein>
    <recommendedName>
        <fullName>Myelin protein zero-like protein 3</fullName>
    </recommendedName>
</protein>
<accession>Q3V3F6</accession>
<accession>A5H7F1</accession>
<comment type="function">
    <text evidence="1">Mediates homophilic cell-cell adhesion.</text>
</comment>
<comment type="subcellular location">
    <subcellularLocation>
        <location evidence="7">Membrane</location>
        <topology evidence="7">Single-pass type I membrane protein</topology>
    </subcellularLocation>
</comment>
<comment type="alternative products">
    <event type="alternative splicing"/>
    <isoform>
        <id>Q3V3F6-1</id>
        <name>1</name>
        <sequence type="displayed"/>
    </isoform>
    <isoform>
        <id>Q3V3F6-2</id>
        <name>2</name>
        <sequence type="described" ref="VSP_023606 VSP_023607"/>
    </isoform>
</comment>
<comment type="tissue specificity">
    <text evidence="4">Present in all tissues tested, including the skin. Present in the keratinocytes and sebocytes in the skin (at protein level).</text>
</comment>
<comment type="disease">
    <text>Defects in Mpzl3 are the cause of rough coat (rc) phenotype, an autosomal-recessive mutation, arose spontaneously in C57BL/6J mice. Rc mice develop severe skin and hair abnormalities, including cyclic and progressive hair loss and sebaceous gland hypertrophy.</text>
</comment>
<comment type="similarity">
    <text evidence="7">Belongs to the myelin P0 protein family.</text>
</comment>
<name>MPZL3_MOUSE</name>
<sequence length="237" mass="26058">MQLARGTVGGRGCALFPLLSILVVQGARIVLSLEISADAHVRGYVGEKIKLKCTFKSSSDVTDKLTIDWTYRPPSSSRTESIFHYQSFQYPTTAGTFRDRISWAGNVYKGDASISISNPTLKDNGTFSCAVKNPPDVYHNIPLTELTVTERGFGTMLSSVALLSILVFVPSAVVVILLLVRMGRKATGVQKRSRSGYKKSSIEVSDDTDQEDSNDCMTRLCVRCAECLDSDYEEEAY</sequence>
<proteinExistence type="evidence at protein level"/>
<dbReference type="EMBL" id="EF102773">
    <property type="protein sequence ID" value="ABO21574.1"/>
    <property type="molecule type" value="mRNA"/>
</dbReference>
<dbReference type="EMBL" id="AK041037">
    <property type="protein sequence ID" value="BAC30792.1"/>
    <property type="molecule type" value="mRNA"/>
</dbReference>
<dbReference type="EMBL" id="AC122305">
    <property type="status" value="NOT_ANNOTATED_CDS"/>
    <property type="molecule type" value="Genomic_DNA"/>
</dbReference>
<dbReference type="EMBL" id="BC132150">
    <property type="protein sequence ID" value="AAI32151.1"/>
    <property type="molecule type" value="mRNA"/>
</dbReference>
<dbReference type="CCDS" id="CCDS52781.1">
    <molecule id="Q3V3F6-1"/>
</dbReference>
<dbReference type="RefSeq" id="NP_001087218.1">
    <molecule id="Q3V3F6-1"/>
    <property type="nucleotide sequence ID" value="NM_001093749.3"/>
</dbReference>
<dbReference type="SMR" id="Q3V3F6"/>
<dbReference type="FunCoup" id="Q3V3F6">
    <property type="interactions" value="705"/>
</dbReference>
<dbReference type="STRING" id="10090.ENSMUSP00000110312"/>
<dbReference type="GlyCosmos" id="Q3V3F6">
    <property type="glycosylation" value="1 site, No reported glycans"/>
</dbReference>
<dbReference type="GlyGen" id="Q3V3F6">
    <property type="glycosylation" value="1 site, 1 N-linked glycan (1 site)"/>
</dbReference>
<dbReference type="PhosphoSitePlus" id="Q3V3F6"/>
<dbReference type="SwissPalm" id="Q3V3F6"/>
<dbReference type="PaxDb" id="10090-ENSMUSP00000110312"/>
<dbReference type="ProteomicsDB" id="252614">
    <molecule id="Q3V3F6-1"/>
</dbReference>
<dbReference type="ProteomicsDB" id="252615">
    <molecule id="Q3V3F6-2"/>
</dbReference>
<dbReference type="Antibodypedia" id="32439">
    <property type="antibodies" value="87 antibodies from 17 providers"/>
</dbReference>
<dbReference type="Ensembl" id="ENSMUST00000114664.8">
    <molecule id="Q3V3F6-1"/>
    <property type="protein sequence ID" value="ENSMUSP00000110312.3"/>
    <property type="gene ID" value="ENSMUSG00000070305.11"/>
</dbReference>
<dbReference type="GeneID" id="319742"/>
<dbReference type="KEGG" id="mmu:319742"/>
<dbReference type="UCSC" id="uc009pfb.3">
    <molecule id="Q3V3F6-2"/>
    <property type="organism name" value="mouse"/>
</dbReference>
<dbReference type="UCSC" id="uc009pfc.2">
    <molecule id="Q3V3F6-1"/>
    <property type="organism name" value="mouse"/>
</dbReference>
<dbReference type="AGR" id="MGI:2442647"/>
<dbReference type="CTD" id="196264"/>
<dbReference type="MGI" id="MGI:2442647">
    <property type="gene designation" value="Mpzl3"/>
</dbReference>
<dbReference type="VEuPathDB" id="HostDB:ENSMUSG00000070305"/>
<dbReference type="eggNOG" id="ENOG502RYH4">
    <property type="taxonomic scope" value="Eukaryota"/>
</dbReference>
<dbReference type="GeneTree" id="ENSGT01030000234556"/>
<dbReference type="HOGENOM" id="CLU_090350_1_0_1"/>
<dbReference type="InParanoid" id="Q3V3F6"/>
<dbReference type="OMA" id="WCLNCVD"/>
<dbReference type="OrthoDB" id="8916449at2759"/>
<dbReference type="PhylomeDB" id="Q3V3F6"/>
<dbReference type="BioGRID-ORCS" id="319742">
    <property type="hits" value="2 hits in 77 CRISPR screens"/>
</dbReference>
<dbReference type="ChiTaRS" id="Mpzl3">
    <property type="organism name" value="mouse"/>
</dbReference>
<dbReference type="PRO" id="PR:Q3V3F6"/>
<dbReference type="Proteomes" id="UP000000589">
    <property type="component" value="Chromosome 9"/>
</dbReference>
<dbReference type="RNAct" id="Q3V3F6">
    <property type="molecule type" value="protein"/>
</dbReference>
<dbReference type="Bgee" id="ENSMUSG00000070305">
    <property type="expression patterns" value="Expressed in tail skin and 134 other cell types or tissues"/>
</dbReference>
<dbReference type="ExpressionAtlas" id="Q3V3F6">
    <property type="expression patterns" value="baseline and differential"/>
</dbReference>
<dbReference type="GO" id="GO:0016020">
    <property type="term" value="C:membrane"/>
    <property type="evidence" value="ECO:0007669"/>
    <property type="project" value="UniProtKB-SubCell"/>
</dbReference>
<dbReference type="GO" id="GO:0007155">
    <property type="term" value="P:cell adhesion"/>
    <property type="evidence" value="ECO:0007669"/>
    <property type="project" value="UniProtKB-KW"/>
</dbReference>
<dbReference type="GO" id="GO:0030198">
    <property type="term" value="P:extracellular matrix organization"/>
    <property type="evidence" value="ECO:0000315"/>
    <property type="project" value="MGI"/>
</dbReference>
<dbReference type="GO" id="GO:0042633">
    <property type="term" value="P:hair cycle"/>
    <property type="evidence" value="ECO:0000315"/>
    <property type="project" value="MGI"/>
</dbReference>
<dbReference type="FunFam" id="2.60.40.10:FF:000193">
    <property type="entry name" value="Myelin protein zero-like 1 like"/>
    <property type="match status" value="1"/>
</dbReference>
<dbReference type="Gene3D" id="2.60.40.10">
    <property type="entry name" value="Immunoglobulins"/>
    <property type="match status" value="1"/>
</dbReference>
<dbReference type="InterPro" id="IPR007110">
    <property type="entry name" value="Ig-like_dom"/>
</dbReference>
<dbReference type="InterPro" id="IPR036179">
    <property type="entry name" value="Ig-like_dom_sf"/>
</dbReference>
<dbReference type="InterPro" id="IPR013783">
    <property type="entry name" value="Ig-like_fold"/>
</dbReference>
<dbReference type="InterPro" id="IPR003599">
    <property type="entry name" value="Ig_sub"/>
</dbReference>
<dbReference type="InterPro" id="IPR013106">
    <property type="entry name" value="Ig_V-set"/>
</dbReference>
<dbReference type="InterPro" id="IPR000920">
    <property type="entry name" value="Myelin_P0-rel"/>
</dbReference>
<dbReference type="PANTHER" id="PTHR13869">
    <property type="entry name" value="MYELIN P0 RELATED"/>
    <property type="match status" value="1"/>
</dbReference>
<dbReference type="PANTHER" id="PTHR13869:SF20">
    <property type="entry name" value="MYELIN PROTEIN ZERO-LIKE PROTEIN 3"/>
    <property type="match status" value="1"/>
</dbReference>
<dbReference type="Pfam" id="PF07686">
    <property type="entry name" value="V-set"/>
    <property type="match status" value="1"/>
</dbReference>
<dbReference type="PRINTS" id="PR00213">
    <property type="entry name" value="MYELINP0"/>
</dbReference>
<dbReference type="SMART" id="SM00409">
    <property type="entry name" value="IG"/>
    <property type="match status" value="1"/>
</dbReference>
<dbReference type="SMART" id="SM00406">
    <property type="entry name" value="IGv"/>
    <property type="match status" value="1"/>
</dbReference>
<dbReference type="SUPFAM" id="SSF48726">
    <property type="entry name" value="Immunoglobulin"/>
    <property type="match status" value="1"/>
</dbReference>
<dbReference type="PROSITE" id="PS50835">
    <property type="entry name" value="IG_LIKE"/>
    <property type="match status" value="1"/>
</dbReference>
<evidence type="ECO:0000250" key="1"/>
<evidence type="ECO:0000255" key="2"/>
<evidence type="ECO:0000255" key="3">
    <source>
        <dbReference type="PROSITE-ProRule" id="PRU00114"/>
    </source>
</evidence>
<evidence type="ECO:0000269" key="4">
    <source>
    </source>
</evidence>
<evidence type="ECO:0000303" key="5">
    <source>
    </source>
</evidence>
<evidence type="ECO:0000303" key="6">
    <source>
    </source>
</evidence>
<evidence type="ECO:0000305" key="7"/>
<gene>
    <name type="primary">Mpzl3</name>
</gene>
<organism>
    <name type="scientific">Mus musculus</name>
    <name type="common">Mouse</name>
    <dbReference type="NCBI Taxonomy" id="10090"/>
    <lineage>
        <taxon>Eukaryota</taxon>
        <taxon>Metazoa</taxon>
        <taxon>Chordata</taxon>
        <taxon>Craniata</taxon>
        <taxon>Vertebrata</taxon>
        <taxon>Euteleostomi</taxon>
        <taxon>Mammalia</taxon>
        <taxon>Eutheria</taxon>
        <taxon>Euarchontoglires</taxon>
        <taxon>Glires</taxon>
        <taxon>Rodentia</taxon>
        <taxon>Myomorpha</taxon>
        <taxon>Muroidea</taxon>
        <taxon>Muridae</taxon>
        <taxon>Murinae</taxon>
        <taxon>Mus</taxon>
        <taxon>Mus</taxon>
    </lineage>
</organism>